<evidence type="ECO:0000250" key="1"/>
<evidence type="ECO:0000250" key="2">
    <source>
        <dbReference type="UniProtKB" id="P22735"/>
    </source>
</evidence>
<evidence type="ECO:0000250" key="3">
    <source>
        <dbReference type="UniProtKB" id="Q9JLF6"/>
    </source>
</evidence>
<evidence type="ECO:0000255" key="4">
    <source>
        <dbReference type="PROSITE-ProRule" id="PRU10024"/>
    </source>
</evidence>
<evidence type="ECO:0000256" key="5">
    <source>
        <dbReference type="SAM" id="MobiDB-lite"/>
    </source>
</evidence>
<evidence type="ECO:0000305" key="6"/>
<feature type="chain" id="PRO_0000213700" description="Protein-glutamine gamma-glutamyltransferase K">
    <location>
        <begin position="1"/>
        <end position="815"/>
    </location>
</feature>
<feature type="region of interest" description="Disordered" evidence="5">
    <location>
        <begin position="1"/>
        <end position="40"/>
    </location>
</feature>
<feature type="region of interest" description="Disordered" evidence="5">
    <location>
        <begin position="59"/>
        <end position="100"/>
    </location>
</feature>
<feature type="region of interest" description="Disordered" evidence="5">
    <location>
        <begin position="795"/>
        <end position="815"/>
    </location>
</feature>
<feature type="compositionally biased region" description="Pro residues" evidence="5">
    <location>
        <begin position="16"/>
        <end position="25"/>
    </location>
</feature>
<feature type="compositionally biased region" description="Basic and acidic residues" evidence="5">
    <location>
        <begin position="59"/>
        <end position="87"/>
    </location>
</feature>
<feature type="active site" evidence="4">
    <location>
        <position position="375"/>
    </location>
</feature>
<feature type="active site" evidence="4">
    <location>
        <position position="434"/>
    </location>
</feature>
<feature type="active site" evidence="4">
    <location>
        <position position="457"/>
    </location>
</feature>
<feature type="binding site" evidence="1">
    <location>
        <position position="497"/>
    </location>
    <ligand>
        <name>Ca(2+)</name>
        <dbReference type="ChEBI" id="CHEBI:29108"/>
    </ligand>
</feature>
<feature type="binding site" evidence="1">
    <location>
        <position position="499"/>
    </location>
    <ligand>
        <name>Ca(2+)</name>
        <dbReference type="ChEBI" id="CHEBI:29108"/>
    </ligand>
</feature>
<feature type="binding site" evidence="1">
    <location>
        <position position="546"/>
    </location>
    <ligand>
        <name>Ca(2+)</name>
        <dbReference type="ChEBI" id="CHEBI:29108"/>
    </ligand>
</feature>
<feature type="binding site" evidence="1">
    <location>
        <position position="551"/>
    </location>
    <ligand>
        <name>Ca(2+)</name>
        <dbReference type="ChEBI" id="CHEBI:29108"/>
    </ligand>
</feature>
<feature type="modified residue" description="Phosphothreonine" evidence="3">
    <location>
        <position position="21"/>
    </location>
</feature>
<feature type="modified residue" description="Phosphoserine" evidence="2">
    <location>
        <position position="23"/>
    </location>
</feature>
<feature type="modified residue" description="Phosphoserine" evidence="2">
    <location>
        <position position="80"/>
    </location>
</feature>
<feature type="modified residue" description="Phosphoserine" evidence="2">
    <location>
        <position position="83"/>
    </location>
</feature>
<feature type="modified residue" description="Phosphoserine" evidence="2">
    <location>
        <position position="90"/>
    </location>
</feature>
<feature type="modified residue" description="Phosphoserine" evidence="3">
    <location>
        <position position="93"/>
    </location>
</feature>
<organism>
    <name type="scientific">Canis lupus familiaris</name>
    <name type="common">Dog</name>
    <name type="synonym">Canis familiaris</name>
    <dbReference type="NCBI Taxonomy" id="9615"/>
    <lineage>
        <taxon>Eukaryota</taxon>
        <taxon>Metazoa</taxon>
        <taxon>Chordata</taxon>
        <taxon>Craniata</taxon>
        <taxon>Vertebrata</taxon>
        <taxon>Euteleostomi</taxon>
        <taxon>Mammalia</taxon>
        <taxon>Eutheria</taxon>
        <taxon>Laurasiatheria</taxon>
        <taxon>Carnivora</taxon>
        <taxon>Caniformia</taxon>
        <taxon>Canidae</taxon>
        <taxon>Canis</taxon>
    </lineage>
</organism>
<gene>
    <name type="primary">TGM1</name>
</gene>
<protein>
    <recommendedName>
        <fullName>Protein-glutamine gamma-glutamyltransferase K</fullName>
        <ecNumber>2.3.2.13</ecNumber>
    </recommendedName>
    <alternativeName>
        <fullName>Epidermal TGase</fullName>
    </alternativeName>
    <alternativeName>
        <fullName>Transglutaminase K</fullName>
        <shortName>TG(K)</shortName>
        <shortName>TGK</shortName>
        <shortName>TGase K</shortName>
    </alternativeName>
    <alternativeName>
        <fullName>Transglutaminase-1</fullName>
        <shortName>TGase-1</shortName>
    </alternativeName>
</protein>
<accession>Q9GLK0</accession>
<dbReference type="EC" id="2.3.2.13"/>
<dbReference type="EMBL" id="AF262219">
    <property type="protein sequence ID" value="AAG13662.1"/>
    <property type="molecule type" value="mRNA"/>
</dbReference>
<dbReference type="RefSeq" id="NP_001003079.1">
    <property type="nucleotide sequence ID" value="NM_001003079.1"/>
</dbReference>
<dbReference type="SMR" id="Q9GLK0"/>
<dbReference type="FunCoup" id="Q9GLK0">
    <property type="interactions" value="183"/>
</dbReference>
<dbReference type="STRING" id="9615.ENSCAFP00000017949"/>
<dbReference type="PaxDb" id="9612-ENSCAFP00000017949"/>
<dbReference type="GeneID" id="403630"/>
<dbReference type="KEGG" id="cfa:403630"/>
<dbReference type="CTD" id="7051"/>
<dbReference type="eggNOG" id="ENOG502QQ46">
    <property type="taxonomic scope" value="Eukaryota"/>
</dbReference>
<dbReference type="InParanoid" id="Q9GLK0"/>
<dbReference type="OrthoDB" id="437511at2759"/>
<dbReference type="Proteomes" id="UP000002254">
    <property type="component" value="Unplaced"/>
</dbReference>
<dbReference type="Proteomes" id="UP000694429">
    <property type="component" value="Unplaced"/>
</dbReference>
<dbReference type="Proteomes" id="UP000694542">
    <property type="component" value="Unplaced"/>
</dbReference>
<dbReference type="Proteomes" id="UP000805418">
    <property type="component" value="Unplaced"/>
</dbReference>
<dbReference type="GO" id="GO:0016020">
    <property type="term" value="C:membrane"/>
    <property type="evidence" value="ECO:0000250"/>
    <property type="project" value="UniProtKB"/>
</dbReference>
<dbReference type="GO" id="GO:0046872">
    <property type="term" value="F:metal ion binding"/>
    <property type="evidence" value="ECO:0007669"/>
    <property type="project" value="UniProtKB-KW"/>
</dbReference>
<dbReference type="GO" id="GO:0003810">
    <property type="term" value="F:protein-glutamine gamma-glutamyltransferase activity"/>
    <property type="evidence" value="ECO:0000318"/>
    <property type="project" value="GO_Central"/>
</dbReference>
<dbReference type="GO" id="GO:0031424">
    <property type="term" value="P:keratinization"/>
    <property type="evidence" value="ECO:0007669"/>
    <property type="project" value="UniProtKB-KW"/>
</dbReference>
<dbReference type="GO" id="GO:0030216">
    <property type="term" value="P:keratinocyte differentiation"/>
    <property type="evidence" value="ECO:0000318"/>
    <property type="project" value="GO_Central"/>
</dbReference>
<dbReference type="GO" id="GO:0045787">
    <property type="term" value="P:positive regulation of cell cycle"/>
    <property type="evidence" value="ECO:0000250"/>
    <property type="project" value="UniProtKB"/>
</dbReference>
<dbReference type="GO" id="GO:0010838">
    <property type="term" value="P:positive regulation of keratinocyte proliferation"/>
    <property type="evidence" value="ECO:0000250"/>
    <property type="project" value="UniProtKB"/>
</dbReference>
<dbReference type="FunFam" id="2.60.40.10:FF:000090">
    <property type="entry name" value="Protein-glutamine gamma-glutamyltransferase 2"/>
    <property type="match status" value="1"/>
</dbReference>
<dbReference type="FunFam" id="3.90.260.10:FF:000001">
    <property type="entry name" value="Protein-glutamine gamma-glutamyltransferase 2"/>
    <property type="match status" value="1"/>
</dbReference>
<dbReference type="FunFam" id="2.60.40.10:FF:000171">
    <property type="entry name" value="protein-glutamine gamma-glutamyltransferase 6"/>
    <property type="match status" value="1"/>
</dbReference>
<dbReference type="FunFam" id="2.60.40.10:FF:001143">
    <property type="entry name" value="Protein-glutamine gamma-glutamyltransferase K"/>
    <property type="match status" value="1"/>
</dbReference>
<dbReference type="Gene3D" id="2.60.40.10">
    <property type="entry name" value="Immunoglobulins"/>
    <property type="match status" value="3"/>
</dbReference>
<dbReference type="Gene3D" id="3.90.260.10">
    <property type="entry name" value="Transglutaminase-like"/>
    <property type="match status" value="1"/>
</dbReference>
<dbReference type="InterPro" id="IPR013783">
    <property type="entry name" value="Ig-like_fold"/>
</dbReference>
<dbReference type="InterPro" id="IPR014756">
    <property type="entry name" value="Ig_E-set"/>
</dbReference>
<dbReference type="InterPro" id="IPR038765">
    <property type="entry name" value="Papain-like_cys_pep_sf"/>
</dbReference>
<dbReference type="InterPro" id="IPR050779">
    <property type="entry name" value="Transglutaminase"/>
</dbReference>
<dbReference type="InterPro" id="IPR002931">
    <property type="entry name" value="Transglutaminase-like"/>
</dbReference>
<dbReference type="InterPro" id="IPR036985">
    <property type="entry name" value="Transglutaminase-like_sf"/>
</dbReference>
<dbReference type="InterPro" id="IPR023608">
    <property type="entry name" value="Transglutaminase_animal"/>
</dbReference>
<dbReference type="InterPro" id="IPR013808">
    <property type="entry name" value="Transglutaminase_AS"/>
</dbReference>
<dbReference type="InterPro" id="IPR008958">
    <property type="entry name" value="Transglutaminase_C"/>
</dbReference>
<dbReference type="InterPro" id="IPR036238">
    <property type="entry name" value="Transglutaminase_C_sf"/>
</dbReference>
<dbReference type="InterPro" id="IPR001102">
    <property type="entry name" value="Transglutaminase_N"/>
</dbReference>
<dbReference type="PANTHER" id="PTHR11590">
    <property type="entry name" value="PROTEIN-GLUTAMINE GAMMA-GLUTAMYLTRANSFERASE"/>
    <property type="match status" value="1"/>
</dbReference>
<dbReference type="PANTHER" id="PTHR11590:SF49">
    <property type="entry name" value="PROTEIN-GLUTAMINE GAMMA-GLUTAMYLTRANSFERASE K"/>
    <property type="match status" value="1"/>
</dbReference>
<dbReference type="Pfam" id="PF00927">
    <property type="entry name" value="Transglut_C"/>
    <property type="match status" value="2"/>
</dbReference>
<dbReference type="Pfam" id="PF01841">
    <property type="entry name" value="Transglut_core"/>
    <property type="match status" value="1"/>
</dbReference>
<dbReference type="Pfam" id="PF00868">
    <property type="entry name" value="Transglut_N"/>
    <property type="match status" value="1"/>
</dbReference>
<dbReference type="PIRSF" id="PIRSF000459">
    <property type="entry name" value="TGM_EBP42"/>
    <property type="match status" value="1"/>
</dbReference>
<dbReference type="SMART" id="SM00460">
    <property type="entry name" value="TGc"/>
    <property type="match status" value="1"/>
</dbReference>
<dbReference type="SUPFAM" id="SSF54001">
    <property type="entry name" value="Cysteine proteinases"/>
    <property type="match status" value="1"/>
</dbReference>
<dbReference type="SUPFAM" id="SSF81296">
    <property type="entry name" value="E set domains"/>
    <property type="match status" value="1"/>
</dbReference>
<dbReference type="SUPFAM" id="SSF49309">
    <property type="entry name" value="Transglutaminase, two C-terminal domains"/>
    <property type="match status" value="2"/>
</dbReference>
<dbReference type="PROSITE" id="PS00547">
    <property type="entry name" value="TRANSGLUTAMINASES"/>
    <property type="match status" value="1"/>
</dbReference>
<name>TGM1_CANLF</name>
<keyword id="KW-0012">Acyltransferase</keyword>
<keyword id="KW-0106">Calcium</keyword>
<keyword id="KW-0417">Keratinization</keyword>
<keyword id="KW-0449">Lipoprotein</keyword>
<keyword id="KW-0472">Membrane</keyword>
<keyword id="KW-0479">Metal-binding</keyword>
<keyword id="KW-0564">Palmitate</keyword>
<keyword id="KW-0597">Phosphoprotein</keyword>
<keyword id="KW-1185">Reference proteome</keyword>
<keyword id="KW-0808">Transferase</keyword>
<proteinExistence type="evidence at transcript level"/>
<sequence length="815" mass="89757">MDGPRSDVGRWGGNPWQPPTTPSPEPEPEPEPERRSRRGGRSFWARCCGCCSCRNRADDDWGPEPHRDRGSGSGRRRPDSRGSDSRRPGSRASGVNAAGDGTIREGMLVVTGVDLLSSRSDQNRREHHTDEFEYDELIIRRGQPFHMVLHFSRPYESSDRVALELLIGNNPEVGKGTHVIIPVGKGGSGGWKAQVTKASGQNLNLRVHTSPNAIIGKFQFTVRTHSEAGEFQLPFDPHNEIYILFNPWCPEDIVYVDHEDWRQEYVLNESGRIYYGTEAQIGERTWNYGQFDHGVLDACLYILDRRGMPYGGRGDPVSVSRVISAMVNSLDDNGVLIGNWSGDYSRGTNPSAWVGSVEILLSYLRTGYSVPYGQCWVFAGVTTTVLRCLGLATRTVTNFNSAHDTDTSLTMDIYFDENMKPLEHLNHDSVWNFHVWNDCWMKRPDLPSGFDGWQVVDATPQETSSGIFCCGPCSVESIKNGLVYMKYDTPFIFAEVNSDKVYWQRQDDGSFKIVYVEEKAIGTLIVTKAVGSNMQDDVTHIYKHPEGSEAERKAVETAAAHGSKPNVYTNRDSAEDVALQVEAQDAVMGQDLTVSVVLTNRGSSTRTVKLHLYLSVTFYTGVTGPVFKESKKEVVLAPGATERVSMPVAYKEYRPQIVDQGSMLLNVSGHVKENGQVLAKQHTFRLRTPDLSLTLLGAAVVGQECEVQIVFKNPLPVTLTNVVFRLEGSGLQRPKILNVGDIGGNETVTLHQKFVPVRPGPRQLIASLDSPQLSQVHGVIQVDVAPAPGGGGFFSNAGGNSPLGETIPMASRGGA</sequence>
<comment type="function">
    <text evidence="2">Catalyzes the cross-linking of proteins and the conjugation of polyamines to proteins. Responsible for cross-linking epidermal proteins during formation of the stratum corneum. Involved in cell proliferation (By similarity).</text>
</comment>
<comment type="catalytic activity">
    <reaction evidence="4">
        <text>L-glutaminyl-[protein] + L-lysyl-[protein] = [protein]-L-lysyl-N(6)-5-L-glutamyl-[protein] + NH4(+)</text>
        <dbReference type="Rhea" id="RHEA:54816"/>
        <dbReference type="Rhea" id="RHEA-COMP:9752"/>
        <dbReference type="Rhea" id="RHEA-COMP:10207"/>
        <dbReference type="Rhea" id="RHEA-COMP:14005"/>
        <dbReference type="ChEBI" id="CHEBI:28938"/>
        <dbReference type="ChEBI" id="CHEBI:29969"/>
        <dbReference type="ChEBI" id="CHEBI:30011"/>
        <dbReference type="ChEBI" id="CHEBI:138370"/>
        <dbReference type="EC" id="2.3.2.13"/>
    </reaction>
</comment>
<comment type="cofactor">
    <cofactor evidence="1">
        <name>Ca(2+)</name>
        <dbReference type="ChEBI" id="CHEBI:29108"/>
    </cofactor>
    <text evidence="1">Binds 1 Ca(2+) ion per subunit.</text>
</comment>
<comment type="subunit">
    <text evidence="2">Interacts with PLAAT4.</text>
</comment>
<comment type="subcellular location">
    <subcellularLocation>
        <location evidence="2">Membrane</location>
        <topology evidence="2">Lipid-anchor</topology>
    </subcellularLocation>
</comment>
<comment type="PTM">
    <text evidence="2">Palmitoylated.</text>
</comment>
<comment type="PTM">
    <text evidence="2">The membrane anchorage region possesses a cluster of five cysteines within which fatty acid(s) may become thioester-linked. It is subject to phorbol ester-stimulated phosphorylation and is hypersensitive to proteolysis, which releases the enzyme in a soluble form.</text>
</comment>
<comment type="PTM">
    <text evidence="3">Tyrosine-phosphorylated.</text>
</comment>
<comment type="similarity">
    <text evidence="6">Belongs to the transglutaminase superfamily. Transglutaminase family.</text>
</comment>
<reference key="1">
    <citation type="journal article" date="2001" name="Cytogenet. Cell Genet.">
        <title>DNA sequence and physical mapping of the canine transglutaminase 1 gene.</title>
        <authorList>
            <person name="Credille K.M."/>
            <person name="Venta P.J."/>
            <person name="Breen M."/>
            <person name="Lowe J.K."/>
            <person name="Murphy K.E."/>
            <person name="Ostrander E.A."/>
            <person name="Galibert F."/>
            <person name="Dunstan R.W."/>
        </authorList>
    </citation>
    <scope>NUCLEOTIDE SEQUENCE [MRNA]</scope>
</reference>